<comment type="function">
    <text evidence="1">Synthase catalytic subunit of the trehalose synthase complex that catalyzes the production of trehalose from glucose-6-phosphate and UDP-alpha-D-glucose in a two step process.</text>
</comment>
<comment type="catalytic activity">
    <reaction evidence="1">
        <text>D-glucose 6-phosphate + UDP-alpha-D-glucose = alpha,alpha-trehalose 6-phosphate + UDP + H(+)</text>
        <dbReference type="Rhea" id="RHEA:18889"/>
        <dbReference type="ChEBI" id="CHEBI:15378"/>
        <dbReference type="ChEBI" id="CHEBI:58223"/>
        <dbReference type="ChEBI" id="CHEBI:58429"/>
        <dbReference type="ChEBI" id="CHEBI:58885"/>
        <dbReference type="ChEBI" id="CHEBI:61548"/>
        <dbReference type="EC" id="2.4.1.15"/>
    </reaction>
</comment>
<comment type="pathway">
    <text evidence="5">Carbohydrate biosynthesis.</text>
</comment>
<comment type="induction">
    <text evidence="3">Induced by thermal stress.</text>
</comment>
<comment type="similarity">
    <text evidence="5">Belongs to the glycosyltransferase 20 family.</text>
</comment>
<reference key="1">
    <citation type="journal article" date="1997" name="J. Biol. Chem.">
        <title>The filamentous fungus Aspergillus niger contains two 'differentially regulated' trehalose-6-phosphate synthase-encoding genes, tpsA and tpsB.</title>
        <authorList>
            <person name="Wolschek M.F."/>
            <person name="Kubicek C.P."/>
        </authorList>
    </citation>
    <scope>NUCLEOTIDE SEQUENCE [GENOMIC DNA]</scope>
    <scope>INDUCTION</scope>
    <source>
        <strain>ATCC 11414 / NRRL 2270 / VTT D-77050 / A-1-233</strain>
    </source>
</reference>
<feature type="chain" id="PRO_0000122495" description="Alpha,alpha-trehalose-phosphate synthase [UDP-forming] 2">
    <location>
        <begin position="1"/>
        <end position="480"/>
    </location>
</feature>
<feature type="binding site" evidence="2">
    <location>
        <position position="97"/>
    </location>
    <ligand>
        <name>D-glucose 6-phosphate</name>
        <dbReference type="ChEBI" id="CHEBI:61548"/>
    </ligand>
</feature>
<feature type="binding site" evidence="2">
    <location>
        <position position="151"/>
    </location>
    <ligand>
        <name>D-glucose 6-phosphate</name>
        <dbReference type="ChEBI" id="CHEBI:61548"/>
    </ligand>
</feature>
<feature type="binding site" evidence="2">
    <location>
        <position position="288"/>
    </location>
    <ligand>
        <name>UDP</name>
        <dbReference type="ChEBI" id="CHEBI:58223"/>
    </ligand>
</feature>
<feature type="binding site" evidence="2">
    <location>
        <position position="288"/>
    </location>
    <ligand>
        <name>UDP-alpha-D-glucose</name>
        <dbReference type="ChEBI" id="CHEBI:58885"/>
    </ligand>
</feature>
<feature type="binding site" evidence="2">
    <location>
        <position position="293"/>
    </location>
    <ligand>
        <name>UDP</name>
        <dbReference type="ChEBI" id="CHEBI:58223"/>
    </ligand>
</feature>
<feature type="binding site" evidence="2">
    <location>
        <position position="293"/>
    </location>
    <ligand>
        <name>UDP-alpha-D-glucose</name>
        <dbReference type="ChEBI" id="CHEBI:58885"/>
    </ligand>
</feature>
<feature type="binding site" evidence="2">
    <location>
        <position position="326"/>
    </location>
    <ligand>
        <name>D-glucose 6-phosphate</name>
        <dbReference type="ChEBI" id="CHEBI:61548"/>
    </ligand>
</feature>
<feature type="binding site" evidence="2">
    <location>
        <begin position="387"/>
        <end position="395"/>
    </location>
    <ligand>
        <name>UDP-alpha-D-glucose</name>
        <dbReference type="ChEBI" id="CHEBI:58885"/>
    </ligand>
</feature>
<feature type="binding site" evidence="2">
    <location>
        <begin position="391"/>
        <end position="395"/>
    </location>
    <ligand>
        <name>UDP</name>
        <dbReference type="ChEBI" id="CHEBI:58223"/>
    </ligand>
</feature>
<gene>
    <name evidence="4" type="primary">tpsB</name>
</gene>
<accession>Q00217</accession>
<evidence type="ECO:0000250" key="1">
    <source>
        <dbReference type="UniProtKB" id="Q00764"/>
    </source>
</evidence>
<evidence type="ECO:0000250" key="2">
    <source>
        <dbReference type="UniProtKB" id="Q92410"/>
    </source>
</evidence>
<evidence type="ECO:0000269" key="3">
    <source>
    </source>
</evidence>
<evidence type="ECO:0000303" key="4">
    <source>
    </source>
</evidence>
<evidence type="ECO:0000305" key="5"/>
<keyword id="KW-0328">Glycosyltransferase</keyword>
<keyword id="KW-0808">Transferase</keyword>
<name>TPS1B_ASPNG</name>
<dbReference type="EC" id="2.4.1.15" evidence="1"/>
<dbReference type="EMBL" id="U63416">
    <property type="protein sequence ID" value="AAB05869.1"/>
    <property type="molecule type" value="Genomic_DNA"/>
</dbReference>
<dbReference type="RefSeq" id="XP_001391945.1">
    <property type="nucleotide sequence ID" value="XM_001391908.3"/>
</dbReference>
<dbReference type="SMR" id="Q00217"/>
<dbReference type="CAZy" id="GT20">
    <property type="family name" value="Glycosyltransferase Family 20"/>
</dbReference>
<dbReference type="PaxDb" id="5061-CADANGAP00006023"/>
<dbReference type="EnsemblFungi" id="CAK39664">
    <property type="protein sequence ID" value="CAK39664"/>
    <property type="gene ID" value="An07g08710"/>
</dbReference>
<dbReference type="GeneID" id="4982139"/>
<dbReference type="KEGG" id="ang:An07g08710"/>
<dbReference type="VEuPathDB" id="FungiDB:An07g08710"/>
<dbReference type="VEuPathDB" id="FungiDB:ASPNIDRAFT2_1105321"/>
<dbReference type="VEuPathDB" id="FungiDB:ATCC64974_49340"/>
<dbReference type="VEuPathDB" id="FungiDB:M747DRAFT_141122"/>
<dbReference type="eggNOG" id="KOG1050">
    <property type="taxonomic scope" value="Eukaryota"/>
</dbReference>
<dbReference type="OrthoDB" id="755951at2759"/>
<dbReference type="GO" id="GO:0005946">
    <property type="term" value="C:alpha,alpha-trehalose-phosphate synthase complex (UDP-forming)"/>
    <property type="evidence" value="ECO:0007669"/>
    <property type="project" value="TreeGrafter"/>
</dbReference>
<dbReference type="GO" id="GO:0005829">
    <property type="term" value="C:cytosol"/>
    <property type="evidence" value="ECO:0007669"/>
    <property type="project" value="TreeGrafter"/>
</dbReference>
<dbReference type="GO" id="GO:0003825">
    <property type="term" value="F:alpha,alpha-trehalose-phosphate synthase (UDP-forming) activity"/>
    <property type="evidence" value="ECO:0007669"/>
    <property type="project" value="UniProtKB-EC"/>
</dbReference>
<dbReference type="GO" id="GO:0004805">
    <property type="term" value="F:trehalose-phosphatase activity"/>
    <property type="evidence" value="ECO:0007669"/>
    <property type="project" value="TreeGrafter"/>
</dbReference>
<dbReference type="GO" id="GO:0034605">
    <property type="term" value="P:cellular response to heat"/>
    <property type="evidence" value="ECO:0007669"/>
    <property type="project" value="TreeGrafter"/>
</dbReference>
<dbReference type="GO" id="GO:0005992">
    <property type="term" value="P:trehalose biosynthetic process"/>
    <property type="evidence" value="ECO:0007669"/>
    <property type="project" value="InterPro"/>
</dbReference>
<dbReference type="CDD" id="cd03788">
    <property type="entry name" value="GT20_TPS"/>
    <property type="match status" value="1"/>
</dbReference>
<dbReference type="FunFam" id="3.40.50.2000:FF:000007">
    <property type="entry name" value="Trehalose-6-phosphate synthase"/>
    <property type="match status" value="1"/>
</dbReference>
<dbReference type="FunFam" id="3.40.50.2000:FF:000035">
    <property type="entry name" value="Trehalose-6-phosphate synthase"/>
    <property type="match status" value="1"/>
</dbReference>
<dbReference type="Gene3D" id="3.40.50.2000">
    <property type="entry name" value="Glycogen Phosphorylase B"/>
    <property type="match status" value="2"/>
</dbReference>
<dbReference type="InterPro" id="IPR001830">
    <property type="entry name" value="Glyco_trans_20"/>
</dbReference>
<dbReference type="InterPro" id="IPR012766">
    <property type="entry name" value="Trehalose_OtsA"/>
</dbReference>
<dbReference type="NCBIfam" id="TIGR02400">
    <property type="entry name" value="trehalose_OtsA"/>
    <property type="match status" value="1"/>
</dbReference>
<dbReference type="PANTHER" id="PTHR10788:SF106">
    <property type="entry name" value="BCDNA.GH08860"/>
    <property type="match status" value="1"/>
</dbReference>
<dbReference type="PANTHER" id="PTHR10788">
    <property type="entry name" value="TREHALOSE-6-PHOSPHATE SYNTHASE"/>
    <property type="match status" value="1"/>
</dbReference>
<dbReference type="Pfam" id="PF00982">
    <property type="entry name" value="Glyco_transf_20"/>
    <property type="match status" value="1"/>
</dbReference>
<dbReference type="SUPFAM" id="SSF53756">
    <property type="entry name" value="UDP-Glycosyltransferase/glycogen phosphorylase"/>
    <property type="match status" value="1"/>
</dbReference>
<organism>
    <name type="scientific">Aspergillus niger</name>
    <dbReference type="NCBI Taxonomy" id="5061"/>
    <lineage>
        <taxon>Eukaryota</taxon>
        <taxon>Fungi</taxon>
        <taxon>Dikarya</taxon>
        <taxon>Ascomycota</taxon>
        <taxon>Pezizomycotina</taxon>
        <taxon>Eurotiomycetes</taxon>
        <taxon>Eurotiomycetidae</taxon>
        <taxon>Eurotiales</taxon>
        <taxon>Aspergillaceae</taxon>
        <taxon>Aspergillus</taxon>
        <taxon>Aspergillus subgen. Circumdati</taxon>
    </lineage>
</organism>
<protein>
    <recommendedName>
        <fullName>Alpha,alpha-trehalose-phosphate synthase [UDP-forming] 2</fullName>
        <ecNumber evidence="1">2.4.1.15</ecNumber>
    </recommendedName>
    <alternativeName>
        <fullName>Trehalose-6-phosphate synthase</fullName>
    </alternativeName>
    <alternativeName>
        <fullName>UDP-glucose-glucosephosphate glucosyltransferase</fullName>
    </alternativeName>
</protein>
<proteinExistence type="evidence at transcript level"/>
<sequence>MAANGSSSEGDHRLLIVSNRLPITIRRSGGGKYEFSMSSGGLVTGLSGLSKTTTFQWYGWPGLEVPEDEIDSVKQRLQEEFNATPVFMDDKLADRHYNGFSNSILWPLLHYHPGEIVFDEAAWDAYREANRLFAKTIAHEAREGDLVWVHDYHLMLLPEVLREELAALGKNNIRIGFFLHTPFPSSEIYRILPVRSQLLRGVLQCDLIGFHTYDYARHFLSCCSHILGLVTTPSSVKFKDRSVAVGAFPIGIDPDKFTEGLKSPKVQNRIASLENKFQGTKLMVSVDRLDYIKGIPQKLHALEVFLSQHPEWVGKVVLVQVAVPSRQDVEEYQNLRAVVNELVGRINGKFGTVDYMPIHFMHKSVSFDELIALYAASDACVVSSTRDGMNLVSFEYVATQQKRKGVLILSEFAGAAQSLNGSIVVNPWNTEELASAYHEAVSMSDDLRAQKFEKLYKYISKYTSAFWGKSFVAELSKCST</sequence>